<protein>
    <recommendedName>
        <fullName evidence="1">Sulfite reductase [NADPH] flavoprotein alpha-component</fullName>
        <shortName evidence="1">SiR-FP</shortName>
        <ecNumber evidence="1">1.8.1.2</ecNumber>
    </recommendedName>
</protein>
<feature type="chain" id="PRO_0000292967" description="Sulfite reductase [NADPH] flavoprotein alpha-component">
    <location>
        <begin position="1"/>
        <end position="599"/>
    </location>
</feature>
<feature type="domain" description="Flavodoxin-like" evidence="1">
    <location>
        <begin position="64"/>
        <end position="202"/>
    </location>
</feature>
<feature type="domain" description="FAD-binding FR-type" evidence="1">
    <location>
        <begin position="234"/>
        <end position="448"/>
    </location>
</feature>
<feature type="binding site" evidence="1">
    <location>
        <begin position="70"/>
        <end position="75"/>
    </location>
    <ligand>
        <name>FMN</name>
        <dbReference type="ChEBI" id="CHEBI:58210"/>
    </ligand>
</feature>
<feature type="binding site" evidence="1">
    <location>
        <begin position="117"/>
        <end position="120"/>
    </location>
    <ligand>
        <name>FMN</name>
        <dbReference type="ChEBI" id="CHEBI:58210"/>
    </ligand>
</feature>
<feature type="binding site" evidence="1">
    <location>
        <begin position="153"/>
        <end position="162"/>
    </location>
    <ligand>
        <name>FMN</name>
        <dbReference type="ChEBI" id="CHEBI:58210"/>
    </ligand>
</feature>
<feature type="binding site" evidence="1">
    <location>
        <position position="322"/>
    </location>
    <ligand>
        <name>FAD</name>
        <dbReference type="ChEBI" id="CHEBI:57692"/>
    </ligand>
</feature>
<feature type="binding site" evidence="1">
    <location>
        <position position="356"/>
    </location>
    <ligand>
        <name>FAD</name>
        <dbReference type="ChEBI" id="CHEBI:57692"/>
    </ligand>
</feature>
<feature type="binding site" evidence="1">
    <location>
        <begin position="386"/>
        <end position="389"/>
    </location>
    <ligand>
        <name>FAD</name>
        <dbReference type="ChEBI" id="CHEBI:57692"/>
    </ligand>
</feature>
<feature type="binding site" evidence="1">
    <location>
        <begin position="404"/>
        <end position="406"/>
    </location>
    <ligand>
        <name>FAD</name>
        <dbReference type="ChEBI" id="CHEBI:57692"/>
    </ligand>
</feature>
<feature type="binding site" evidence="1">
    <location>
        <position position="410"/>
    </location>
    <ligand>
        <name>FAD</name>
        <dbReference type="ChEBI" id="CHEBI:57692"/>
    </ligand>
</feature>
<feature type="binding site" evidence="1">
    <location>
        <begin position="419"/>
        <end position="422"/>
    </location>
    <ligand>
        <name>FAD</name>
        <dbReference type="ChEBI" id="CHEBI:57692"/>
    </ligand>
</feature>
<feature type="binding site" evidence="1">
    <location>
        <begin position="519"/>
        <end position="520"/>
    </location>
    <ligand>
        <name>NADP(+)</name>
        <dbReference type="ChEBI" id="CHEBI:58349"/>
    </ligand>
</feature>
<feature type="binding site" evidence="1">
    <location>
        <begin position="525"/>
        <end position="529"/>
    </location>
    <ligand>
        <name>NADP(+)</name>
        <dbReference type="ChEBI" id="CHEBI:58349"/>
    </ligand>
</feature>
<feature type="binding site" evidence="1">
    <location>
        <position position="561"/>
    </location>
    <ligand>
        <name>NADP(+)</name>
        <dbReference type="ChEBI" id="CHEBI:58349"/>
    </ligand>
</feature>
<feature type="binding site" evidence="1">
    <location>
        <position position="599"/>
    </location>
    <ligand>
        <name>FAD</name>
        <dbReference type="ChEBI" id="CHEBI:57692"/>
    </ligand>
</feature>
<name>CYSJ_ECOK1</name>
<keyword id="KW-0028">Amino-acid biosynthesis</keyword>
<keyword id="KW-0198">Cysteine biosynthesis</keyword>
<keyword id="KW-0249">Electron transport</keyword>
<keyword id="KW-0274">FAD</keyword>
<keyword id="KW-0285">Flavoprotein</keyword>
<keyword id="KW-0288">FMN</keyword>
<keyword id="KW-0521">NADP</keyword>
<keyword id="KW-0560">Oxidoreductase</keyword>
<keyword id="KW-1185">Reference proteome</keyword>
<keyword id="KW-0813">Transport</keyword>
<reference key="1">
    <citation type="journal article" date="2007" name="J. Bacteriol.">
        <title>The genome sequence of avian pathogenic Escherichia coli strain O1:K1:H7 shares strong similarities with human extraintestinal pathogenic E. coli genomes.</title>
        <authorList>
            <person name="Johnson T.J."/>
            <person name="Kariyawasam S."/>
            <person name="Wannemuehler Y."/>
            <person name="Mangiamele P."/>
            <person name="Johnson S.J."/>
            <person name="Doetkott C."/>
            <person name="Skyberg J.A."/>
            <person name="Lynne A.M."/>
            <person name="Johnson J.R."/>
            <person name="Nolan L.K."/>
        </authorList>
    </citation>
    <scope>NUCLEOTIDE SEQUENCE [LARGE SCALE GENOMIC DNA]</scope>
</reference>
<gene>
    <name evidence="1" type="primary">cysJ</name>
    <name type="ordered locus">Ecok1_26960</name>
    <name type="ORF">APECO1_3768</name>
</gene>
<proteinExistence type="inferred from homology"/>
<comment type="function">
    <text evidence="1">Component of the sulfite reductase complex that catalyzes the 6-electron reduction of sulfite to sulfide. This is one of several activities required for the biosynthesis of L-cysteine from sulfate. The flavoprotein component catalyzes the electron flow from NADPH -&gt; FAD -&gt; FMN to the hemoprotein component.</text>
</comment>
<comment type="catalytic activity">
    <reaction evidence="1">
        <text>hydrogen sulfide + 3 NADP(+) + 3 H2O = sulfite + 3 NADPH + 4 H(+)</text>
        <dbReference type="Rhea" id="RHEA:13801"/>
        <dbReference type="ChEBI" id="CHEBI:15377"/>
        <dbReference type="ChEBI" id="CHEBI:15378"/>
        <dbReference type="ChEBI" id="CHEBI:17359"/>
        <dbReference type="ChEBI" id="CHEBI:29919"/>
        <dbReference type="ChEBI" id="CHEBI:57783"/>
        <dbReference type="ChEBI" id="CHEBI:58349"/>
        <dbReference type="EC" id="1.8.1.2"/>
    </reaction>
</comment>
<comment type="cofactor">
    <cofactor evidence="1">
        <name>FAD</name>
        <dbReference type="ChEBI" id="CHEBI:57692"/>
    </cofactor>
    <text evidence="1">Binds 1 FAD per subunit.</text>
</comment>
<comment type="cofactor">
    <cofactor evidence="1">
        <name>FMN</name>
        <dbReference type="ChEBI" id="CHEBI:58210"/>
    </cofactor>
    <text evidence="1">Binds 1 FMN per subunit.</text>
</comment>
<comment type="pathway">
    <text evidence="1">Sulfur metabolism; hydrogen sulfide biosynthesis; hydrogen sulfide from sulfite (NADPH route): step 1/1.</text>
</comment>
<comment type="subunit">
    <text evidence="1">Alpha(8)-beta(8). The alpha component is a flavoprotein, the beta component is a hemoprotein.</text>
</comment>
<comment type="similarity">
    <text evidence="1">Belongs to the NADPH-dependent sulphite reductase flavoprotein subunit CysJ family.</text>
</comment>
<comment type="similarity">
    <text evidence="1">In the N-terminal section; belongs to the flavodoxin family.</text>
</comment>
<comment type="similarity">
    <text evidence="1">In the C-terminal section; belongs to the flavoprotein pyridine nucleotide cytochrome reductase family.</text>
</comment>
<sequence length="599" mass="66312">MTTQVPPSALLPLNPEQLARLQAATTDLTPTQLAWVSGYFWGVLNQQPAALAATPAPAAEMPGITIISASQTGNARRVAEALRDDLLAAKLNVKLVNAGDYKFKQIASEKLLIVVTSTQGEGEPPEEAVALHKFLFSKKAPKLENTAFAVFSLGDSSYEFFCQSGKDFDSKLAELGGERLLDRVDADVEYQAAASEWRARVVDALKSRAPVAAPSQSVATGTVNEIHTSPYSKDAPLAASLSVNQKITGRNSEKDVRHIEIDLGDSGLRYQPGDALGVWYQNDPALVKELVELLWLKGDEPVTVEGKTLPLNEALQWHFELTVNTANIVENYATLTRSETLLPLVGDKAKLQHYAATTPIVDMVRFSPAQLDAEALINLLRPLTPRLYSIASSQAEVENEVHVTVGVVRYDVEGRARAGGASSFLADRVEEEGEVRVFIEHNDNFRLPTNPETPVIMIGPGTGIAPFRAFMQQRAADEAPGKNWLFFGNPHFTEDFLYQVEWQRYVKEGVLTRIDLAWSRDQKEKIYVQDKLREQGAELWRWINDGAHIYVCGDANRMAKDVEQALLEVIAEFGGMDTEAADEFLSELRVERRYQRDVY</sequence>
<organism>
    <name type="scientific">Escherichia coli O1:K1 / APEC</name>
    <dbReference type="NCBI Taxonomy" id="405955"/>
    <lineage>
        <taxon>Bacteria</taxon>
        <taxon>Pseudomonadati</taxon>
        <taxon>Pseudomonadota</taxon>
        <taxon>Gammaproteobacteria</taxon>
        <taxon>Enterobacterales</taxon>
        <taxon>Enterobacteriaceae</taxon>
        <taxon>Escherichia</taxon>
    </lineage>
</organism>
<dbReference type="EC" id="1.8.1.2" evidence="1"/>
<dbReference type="EMBL" id="CP000468">
    <property type="protein sequence ID" value="ABJ02190.1"/>
    <property type="molecule type" value="Genomic_DNA"/>
</dbReference>
<dbReference type="RefSeq" id="WP_000211914.1">
    <property type="nucleotide sequence ID" value="NZ_CADILS010000024.1"/>
</dbReference>
<dbReference type="BMRB" id="A1AEV0"/>
<dbReference type="SMR" id="A1AEV0"/>
<dbReference type="KEGG" id="ecv:APECO1_3768"/>
<dbReference type="HOGENOM" id="CLU_001570_17_7_6"/>
<dbReference type="UniPathway" id="UPA00140">
    <property type="reaction ID" value="UER00207"/>
</dbReference>
<dbReference type="Proteomes" id="UP000008216">
    <property type="component" value="Chromosome"/>
</dbReference>
<dbReference type="GO" id="GO:0005829">
    <property type="term" value="C:cytosol"/>
    <property type="evidence" value="ECO:0007669"/>
    <property type="project" value="TreeGrafter"/>
</dbReference>
<dbReference type="GO" id="GO:0050660">
    <property type="term" value="F:flavin adenine dinucleotide binding"/>
    <property type="evidence" value="ECO:0007669"/>
    <property type="project" value="InterPro"/>
</dbReference>
<dbReference type="GO" id="GO:0010181">
    <property type="term" value="F:FMN binding"/>
    <property type="evidence" value="ECO:0007669"/>
    <property type="project" value="InterPro"/>
</dbReference>
<dbReference type="GO" id="GO:0004783">
    <property type="term" value="F:sulfite reductase (NADPH) activity"/>
    <property type="evidence" value="ECO:0007669"/>
    <property type="project" value="UniProtKB-UniRule"/>
</dbReference>
<dbReference type="GO" id="GO:0019344">
    <property type="term" value="P:cysteine biosynthetic process"/>
    <property type="evidence" value="ECO:0007669"/>
    <property type="project" value="UniProtKB-KW"/>
</dbReference>
<dbReference type="GO" id="GO:0070814">
    <property type="term" value="P:hydrogen sulfide biosynthetic process"/>
    <property type="evidence" value="ECO:0007669"/>
    <property type="project" value="UniProtKB-UniRule"/>
</dbReference>
<dbReference type="GO" id="GO:0000103">
    <property type="term" value="P:sulfate assimilation"/>
    <property type="evidence" value="ECO:0007669"/>
    <property type="project" value="UniProtKB-UniRule"/>
</dbReference>
<dbReference type="CDD" id="cd06199">
    <property type="entry name" value="SiR"/>
    <property type="match status" value="1"/>
</dbReference>
<dbReference type="FunFam" id="3.40.50.80:FF:000001">
    <property type="entry name" value="NADPH--cytochrome P450 reductase 1"/>
    <property type="match status" value="1"/>
</dbReference>
<dbReference type="FunFam" id="1.20.990.10:FF:000004">
    <property type="entry name" value="Sulfite reductase [NADPH] flavoprotein alpha-component"/>
    <property type="match status" value="1"/>
</dbReference>
<dbReference type="FunFam" id="3.40.50.360:FF:000018">
    <property type="entry name" value="Sulfite reductase [NADPH] flavoprotein alpha-component"/>
    <property type="match status" value="1"/>
</dbReference>
<dbReference type="Gene3D" id="3.40.50.360">
    <property type="match status" value="1"/>
</dbReference>
<dbReference type="Gene3D" id="1.20.990.10">
    <property type="entry name" value="NADPH-cytochrome p450 Reductase, Chain A, domain 3"/>
    <property type="match status" value="1"/>
</dbReference>
<dbReference type="Gene3D" id="3.40.50.80">
    <property type="entry name" value="Nucleotide-binding domain of ferredoxin-NADP reductase (FNR) module"/>
    <property type="match status" value="1"/>
</dbReference>
<dbReference type="Gene3D" id="2.40.30.10">
    <property type="entry name" value="Translation factors"/>
    <property type="match status" value="1"/>
</dbReference>
<dbReference type="HAMAP" id="MF_01541">
    <property type="entry name" value="CysJ"/>
    <property type="match status" value="1"/>
</dbReference>
<dbReference type="InterPro" id="IPR010199">
    <property type="entry name" value="CysJ"/>
</dbReference>
<dbReference type="InterPro" id="IPR003097">
    <property type="entry name" value="CysJ-like_FAD-binding"/>
</dbReference>
<dbReference type="InterPro" id="IPR029758">
    <property type="entry name" value="CysJ_Proteobact"/>
</dbReference>
<dbReference type="InterPro" id="IPR017927">
    <property type="entry name" value="FAD-bd_FR_type"/>
</dbReference>
<dbReference type="InterPro" id="IPR001094">
    <property type="entry name" value="Flavdoxin-like"/>
</dbReference>
<dbReference type="InterPro" id="IPR008254">
    <property type="entry name" value="Flavodoxin/NO_synth"/>
</dbReference>
<dbReference type="InterPro" id="IPR001709">
    <property type="entry name" value="Flavoprot_Pyr_Nucl_cyt_Rdtase"/>
</dbReference>
<dbReference type="InterPro" id="IPR029039">
    <property type="entry name" value="Flavoprotein-like_sf"/>
</dbReference>
<dbReference type="InterPro" id="IPR039261">
    <property type="entry name" value="FNR_nucleotide-bd"/>
</dbReference>
<dbReference type="InterPro" id="IPR023173">
    <property type="entry name" value="NADPH_Cyt_P450_Rdtase_alpha"/>
</dbReference>
<dbReference type="InterPro" id="IPR001433">
    <property type="entry name" value="OxRdtase_FAD/NAD-bd"/>
</dbReference>
<dbReference type="InterPro" id="IPR017938">
    <property type="entry name" value="Riboflavin_synthase-like_b-brl"/>
</dbReference>
<dbReference type="NCBIfam" id="TIGR01931">
    <property type="entry name" value="cysJ"/>
    <property type="match status" value="1"/>
</dbReference>
<dbReference type="NCBIfam" id="NF004859">
    <property type="entry name" value="PRK06214.1"/>
    <property type="match status" value="1"/>
</dbReference>
<dbReference type="NCBIfam" id="NF008197">
    <property type="entry name" value="PRK10953.1"/>
    <property type="match status" value="1"/>
</dbReference>
<dbReference type="PANTHER" id="PTHR19384:SF128">
    <property type="entry name" value="NADPH OXIDOREDUCTASE A"/>
    <property type="match status" value="1"/>
</dbReference>
<dbReference type="PANTHER" id="PTHR19384">
    <property type="entry name" value="NITRIC OXIDE SYNTHASE-RELATED"/>
    <property type="match status" value="1"/>
</dbReference>
<dbReference type="Pfam" id="PF00667">
    <property type="entry name" value="FAD_binding_1"/>
    <property type="match status" value="1"/>
</dbReference>
<dbReference type="Pfam" id="PF00258">
    <property type="entry name" value="Flavodoxin_1"/>
    <property type="match status" value="1"/>
</dbReference>
<dbReference type="Pfam" id="PF00175">
    <property type="entry name" value="NAD_binding_1"/>
    <property type="match status" value="1"/>
</dbReference>
<dbReference type="PIRSF" id="PIRSF000207">
    <property type="entry name" value="SiR-FP_CysJ"/>
    <property type="match status" value="1"/>
</dbReference>
<dbReference type="PRINTS" id="PR00369">
    <property type="entry name" value="FLAVODOXIN"/>
</dbReference>
<dbReference type="PRINTS" id="PR00371">
    <property type="entry name" value="FPNCR"/>
</dbReference>
<dbReference type="SUPFAM" id="SSF52343">
    <property type="entry name" value="Ferredoxin reductase-like, C-terminal NADP-linked domain"/>
    <property type="match status" value="1"/>
</dbReference>
<dbReference type="SUPFAM" id="SSF52218">
    <property type="entry name" value="Flavoproteins"/>
    <property type="match status" value="1"/>
</dbReference>
<dbReference type="SUPFAM" id="SSF63380">
    <property type="entry name" value="Riboflavin synthase domain-like"/>
    <property type="match status" value="1"/>
</dbReference>
<dbReference type="PROSITE" id="PS51384">
    <property type="entry name" value="FAD_FR"/>
    <property type="match status" value="1"/>
</dbReference>
<dbReference type="PROSITE" id="PS50902">
    <property type="entry name" value="FLAVODOXIN_LIKE"/>
    <property type="match status" value="1"/>
</dbReference>
<evidence type="ECO:0000255" key="1">
    <source>
        <dbReference type="HAMAP-Rule" id="MF_01541"/>
    </source>
</evidence>
<accession>A1AEV0</accession>